<sequence length="67" mass="7633">MAVPKRKMSRSNTRARRSQWKAEAPTLVKTIENGKVVYSMPHRARVIEDAAGTPLYMEYKGRKVADV</sequence>
<reference key="1">
    <citation type="journal article" date="2008" name="J. Bacteriol.">
        <title>Genome of the actinomycete plant pathogen Clavibacter michiganensis subsp. sepedonicus suggests recent niche adaptation.</title>
        <authorList>
            <person name="Bentley S.D."/>
            <person name="Corton C."/>
            <person name="Brown S.E."/>
            <person name="Barron A."/>
            <person name="Clark L."/>
            <person name="Doggett J."/>
            <person name="Harris B."/>
            <person name="Ormond D."/>
            <person name="Quail M.A."/>
            <person name="May G."/>
            <person name="Francis D."/>
            <person name="Knudson D."/>
            <person name="Parkhill J."/>
            <person name="Ishimaru C.A."/>
        </authorList>
    </citation>
    <scope>NUCLEOTIDE SEQUENCE [LARGE SCALE GENOMIC DNA]</scope>
    <source>
        <strain>ATCC 33113 / DSM 20744 / JCM 9667 / LMG 2889 / ICMP 2535 / C-1</strain>
    </source>
</reference>
<accession>B0REL8</accession>
<protein>
    <recommendedName>
        <fullName evidence="1">Large ribosomal subunit protein bL32</fullName>
    </recommendedName>
    <alternativeName>
        <fullName evidence="3">50S ribosomal protein L32</fullName>
    </alternativeName>
</protein>
<name>RL32_CLASE</name>
<proteinExistence type="inferred from homology"/>
<feature type="chain" id="PRO_1000079323" description="Large ribosomal subunit protein bL32">
    <location>
        <begin position="1"/>
        <end position="67"/>
    </location>
</feature>
<feature type="region of interest" description="Disordered" evidence="2">
    <location>
        <begin position="1"/>
        <end position="21"/>
    </location>
</feature>
<feature type="compositionally biased region" description="Basic residues" evidence="2">
    <location>
        <begin position="1"/>
        <end position="19"/>
    </location>
</feature>
<dbReference type="EMBL" id="AM849034">
    <property type="protein sequence ID" value="CAQ00865.1"/>
    <property type="molecule type" value="Genomic_DNA"/>
</dbReference>
<dbReference type="RefSeq" id="WP_012298174.1">
    <property type="nucleotide sequence ID" value="NZ_MZMN01000003.1"/>
</dbReference>
<dbReference type="SMR" id="B0REL8"/>
<dbReference type="STRING" id="31964.CMS0745"/>
<dbReference type="KEGG" id="cms:CMS0745"/>
<dbReference type="eggNOG" id="COG0333">
    <property type="taxonomic scope" value="Bacteria"/>
</dbReference>
<dbReference type="HOGENOM" id="CLU_2805252_0_0_11"/>
<dbReference type="OrthoDB" id="9807363at2"/>
<dbReference type="Proteomes" id="UP000001318">
    <property type="component" value="Chromosome"/>
</dbReference>
<dbReference type="GO" id="GO:0015934">
    <property type="term" value="C:large ribosomal subunit"/>
    <property type="evidence" value="ECO:0007669"/>
    <property type="project" value="InterPro"/>
</dbReference>
<dbReference type="GO" id="GO:0003735">
    <property type="term" value="F:structural constituent of ribosome"/>
    <property type="evidence" value="ECO:0007669"/>
    <property type="project" value="InterPro"/>
</dbReference>
<dbReference type="GO" id="GO:0006412">
    <property type="term" value="P:translation"/>
    <property type="evidence" value="ECO:0007669"/>
    <property type="project" value="UniProtKB-UniRule"/>
</dbReference>
<dbReference type="HAMAP" id="MF_00340">
    <property type="entry name" value="Ribosomal_bL32"/>
    <property type="match status" value="1"/>
</dbReference>
<dbReference type="InterPro" id="IPR002677">
    <property type="entry name" value="Ribosomal_bL32"/>
</dbReference>
<dbReference type="InterPro" id="IPR011332">
    <property type="entry name" value="Ribosomal_zn-bd"/>
</dbReference>
<dbReference type="NCBIfam" id="TIGR01031">
    <property type="entry name" value="rpmF_bact"/>
    <property type="match status" value="1"/>
</dbReference>
<dbReference type="Pfam" id="PF01783">
    <property type="entry name" value="Ribosomal_L32p"/>
    <property type="match status" value="1"/>
</dbReference>
<dbReference type="SUPFAM" id="SSF57829">
    <property type="entry name" value="Zn-binding ribosomal proteins"/>
    <property type="match status" value="1"/>
</dbReference>
<keyword id="KW-0687">Ribonucleoprotein</keyword>
<keyword id="KW-0689">Ribosomal protein</keyword>
<organism>
    <name type="scientific">Clavibacter sepedonicus</name>
    <name type="common">Clavibacter michiganensis subsp. sepedonicus</name>
    <dbReference type="NCBI Taxonomy" id="31964"/>
    <lineage>
        <taxon>Bacteria</taxon>
        <taxon>Bacillati</taxon>
        <taxon>Actinomycetota</taxon>
        <taxon>Actinomycetes</taxon>
        <taxon>Micrococcales</taxon>
        <taxon>Microbacteriaceae</taxon>
        <taxon>Clavibacter</taxon>
    </lineage>
</organism>
<evidence type="ECO:0000255" key="1">
    <source>
        <dbReference type="HAMAP-Rule" id="MF_00340"/>
    </source>
</evidence>
<evidence type="ECO:0000256" key="2">
    <source>
        <dbReference type="SAM" id="MobiDB-lite"/>
    </source>
</evidence>
<evidence type="ECO:0000305" key="3"/>
<comment type="similarity">
    <text evidence="1">Belongs to the bacterial ribosomal protein bL32 family.</text>
</comment>
<gene>
    <name evidence="1" type="primary">rpmF</name>
    <name type="ordered locus">CMS0745</name>
</gene>